<proteinExistence type="evidence at protein level"/>
<accession>P53969</accession>
<accession>D6W1F2</accession>
<gene>
    <name type="primary">SAM50</name>
    <name type="synonym">TOB55</name>
    <name type="ordered locus">YNL026W</name>
    <name type="ORF">N2802</name>
</gene>
<evidence type="ECO:0000250" key="1"/>
<evidence type="ECO:0000269" key="2">
    <source>
    </source>
</evidence>
<evidence type="ECO:0000269" key="3">
    <source>
    </source>
</evidence>
<evidence type="ECO:0000269" key="4">
    <source>
    </source>
</evidence>
<evidence type="ECO:0000305" key="5"/>
<evidence type="ECO:0000305" key="6">
    <source>
    </source>
</evidence>
<evidence type="ECO:0007829" key="7">
    <source>
        <dbReference type="PDB" id="7E4H"/>
    </source>
</evidence>
<sequence>MTSSSGVDNEISLDSPMPIFNESSTLKPIRVAGVVTTGTDHIDPSVLQAYLDDTIMKSITLGQLVKNADVLNKRLCQHHIALNAKQSFHFQGNTYISDEKETHDVVPLMEVVSQLDILPPKTFTAKTGTNFGNDNDAEAYLQFEKLIDKKYLKLPTRVNLEILRGTKIHSSFLFNSYSSLSPQSILNLKVFSQFYNWNTNKGLDIGQRGARLSLRYEPLFLHKLLHNPHSNESPTLFHEWFLETCWRSTKICSQGTSAPYMYSGTMLSQAGDQLRTILGHTFVLDKRDHIMCPTKGSMLKWSNELSPGKHLKTQLELNSVKSWMNDDFITFSTTIKTGYLKNLSSQQSLPVHICDKFQSGGPSDIRGFQTFGLGPRDLYDAVGGDAFVSYGLSVFSRLPWKKVEKSNFRLHWFFNGGKLVNHDNTSLGNCIGQLSKEHSTSTGIGLVLRHPMARFELNFTLPITAHENDLIRKGFQFGLGLAFL</sequence>
<dbReference type="EMBL" id="Z71302">
    <property type="protein sequence ID" value="CAA95888.1"/>
    <property type="molecule type" value="Genomic_DNA"/>
</dbReference>
<dbReference type="EMBL" id="BK006947">
    <property type="protein sequence ID" value="DAA10518.1"/>
    <property type="molecule type" value="Genomic_DNA"/>
</dbReference>
<dbReference type="PIR" id="S62938">
    <property type="entry name" value="S62938"/>
</dbReference>
<dbReference type="RefSeq" id="NP_014372.1">
    <property type="nucleotide sequence ID" value="NM_001182865.1"/>
</dbReference>
<dbReference type="PDB" id="7E4H">
    <property type="method" value="EM"/>
    <property type="resolution" value="3.01 A"/>
    <property type="chains" value="A=2-484"/>
</dbReference>
<dbReference type="PDB" id="7E4I">
    <property type="method" value="EM"/>
    <property type="resolution" value="3.05 A"/>
    <property type="chains" value="A=2-484"/>
</dbReference>
<dbReference type="PDB" id="7VKU">
    <property type="method" value="EM"/>
    <property type="resolution" value="3.20 A"/>
    <property type="chains" value="A=1-484"/>
</dbReference>
<dbReference type="PDBsum" id="7E4H"/>
<dbReference type="PDBsum" id="7E4I"/>
<dbReference type="PDBsum" id="7VKU"/>
<dbReference type="EMDB" id="EMD-30985"/>
<dbReference type="EMDB" id="EMD-30986"/>
<dbReference type="EMDB" id="EMD-32019"/>
<dbReference type="SMR" id="P53969"/>
<dbReference type="BioGRID" id="35800">
    <property type="interactions" value="398"/>
</dbReference>
<dbReference type="ComplexPortal" id="CPX-1744">
    <property type="entry name" value="Mitochondrial sorting and assembly machinery complex"/>
</dbReference>
<dbReference type="FunCoup" id="P53969">
    <property type="interactions" value="200"/>
</dbReference>
<dbReference type="IntAct" id="P53969">
    <property type="interactions" value="15"/>
</dbReference>
<dbReference type="MINT" id="P53969"/>
<dbReference type="STRING" id="4932.YNL026W"/>
<dbReference type="TCDB" id="1.B.33.3.1">
    <property type="family name" value="the outer membrane protein insertion porin (bam complex) (ompip) family"/>
</dbReference>
<dbReference type="iPTMnet" id="P53969"/>
<dbReference type="PaxDb" id="4932-YNL026W"/>
<dbReference type="PeptideAtlas" id="P53969"/>
<dbReference type="EnsemblFungi" id="YNL026W_mRNA">
    <property type="protein sequence ID" value="YNL026W"/>
    <property type="gene ID" value="YNL026W"/>
</dbReference>
<dbReference type="GeneID" id="855705"/>
<dbReference type="KEGG" id="sce:YNL026W"/>
<dbReference type="AGR" id="SGD:S000004971"/>
<dbReference type="SGD" id="S000004971">
    <property type="gene designation" value="SAM50"/>
</dbReference>
<dbReference type="VEuPathDB" id="FungiDB:YNL026W"/>
<dbReference type="eggNOG" id="KOG2602">
    <property type="taxonomic scope" value="Eukaryota"/>
</dbReference>
<dbReference type="GeneTree" id="ENSGT00390000011355"/>
<dbReference type="HOGENOM" id="CLU_014798_3_1_1"/>
<dbReference type="InParanoid" id="P53969"/>
<dbReference type="OMA" id="MNDDFIT"/>
<dbReference type="OrthoDB" id="1724197at2759"/>
<dbReference type="BioCyc" id="YEAST:G3O-33064-MONOMER"/>
<dbReference type="BioGRID-ORCS" id="855705">
    <property type="hits" value="2 hits in 10 CRISPR screens"/>
</dbReference>
<dbReference type="PRO" id="PR:P53969"/>
<dbReference type="Proteomes" id="UP000002311">
    <property type="component" value="Chromosome XIV"/>
</dbReference>
<dbReference type="RNAct" id="P53969">
    <property type="molecule type" value="protein"/>
</dbReference>
<dbReference type="GO" id="GO:0005741">
    <property type="term" value="C:mitochondrial outer membrane"/>
    <property type="evidence" value="ECO:0000314"/>
    <property type="project" value="SGD"/>
</dbReference>
<dbReference type="GO" id="GO:0005739">
    <property type="term" value="C:mitochondrion"/>
    <property type="evidence" value="ECO:0000314"/>
    <property type="project" value="ComplexPortal"/>
</dbReference>
<dbReference type="GO" id="GO:0001401">
    <property type="term" value="C:SAM complex"/>
    <property type="evidence" value="ECO:0000314"/>
    <property type="project" value="SGD"/>
</dbReference>
<dbReference type="GO" id="GO:0032977">
    <property type="term" value="F:membrane insertase activity"/>
    <property type="evidence" value="ECO:0000315"/>
    <property type="project" value="FlyBase"/>
</dbReference>
<dbReference type="GO" id="GO:0008320">
    <property type="term" value="F:protein transmembrane transporter activity"/>
    <property type="evidence" value="ECO:0000314"/>
    <property type="project" value="SGD"/>
</dbReference>
<dbReference type="GO" id="GO:0030150">
    <property type="term" value="P:protein import into mitochondrial matrix"/>
    <property type="evidence" value="ECO:0000314"/>
    <property type="project" value="ComplexPortal"/>
</dbReference>
<dbReference type="GO" id="GO:0045040">
    <property type="term" value="P:protein insertion into mitochondrial outer membrane"/>
    <property type="evidence" value="ECO:0000315"/>
    <property type="project" value="SGD"/>
</dbReference>
<dbReference type="GO" id="GO:0065003">
    <property type="term" value="P:protein-containing complex assembly"/>
    <property type="evidence" value="ECO:0000315"/>
    <property type="project" value="SGD"/>
</dbReference>
<dbReference type="FunFam" id="2.40.160.50:FF:000015">
    <property type="entry name" value="SAM complex subunit"/>
    <property type="match status" value="1"/>
</dbReference>
<dbReference type="Gene3D" id="2.40.160.50">
    <property type="entry name" value="membrane protein fhac: a member of the omp85/tpsb transporter family"/>
    <property type="match status" value="1"/>
</dbReference>
<dbReference type="InterPro" id="IPR000184">
    <property type="entry name" value="Bac_surfAg_D15"/>
</dbReference>
<dbReference type="Pfam" id="PF01103">
    <property type="entry name" value="Omp85"/>
    <property type="match status" value="1"/>
</dbReference>
<reference key="1">
    <citation type="journal article" date="1997" name="Nature">
        <title>The nucleotide sequence of Saccharomyces cerevisiae chromosome XIV and its evolutionary implications.</title>
        <authorList>
            <person name="Philippsen P."/>
            <person name="Kleine K."/>
            <person name="Poehlmann R."/>
            <person name="Duesterhoeft A."/>
            <person name="Hamberg K."/>
            <person name="Hegemann J.H."/>
            <person name="Obermaier B."/>
            <person name="Urrestarazu L.A."/>
            <person name="Aert R."/>
            <person name="Albermann K."/>
            <person name="Altmann R."/>
            <person name="Andre B."/>
            <person name="Baladron V."/>
            <person name="Ballesta J.P.G."/>
            <person name="Becam A.-M."/>
            <person name="Beinhauer J.D."/>
            <person name="Boskovic J."/>
            <person name="Buitrago M.J."/>
            <person name="Bussereau F."/>
            <person name="Coster F."/>
            <person name="Crouzet M."/>
            <person name="D'Angelo M."/>
            <person name="Dal Pero F."/>
            <person name="De Antoni A."/>
            <person name="del Rey F."/>
            <person name="Doignon F."/>
            <person name="Domdey H."/>
            <person name="Dubois E."/>
            <person name="Fiedler T.A."/>
            <person name="Fleig U."/>
            <person name="Floeth M."/>
            <person name="Fritz C."/>
            <person name="Gaillardin C."/>
            <person name="Garcia-Cantalejo J.M."/>
            <person name="Glansdorff N."/>
            <person name="Goffeau A."/>
            <person name="Gueldener U."/>
            <person name="Herbert C.J."/>
            <person name="Heumann K."/>
            <person name="Heuss-Neitzel D."/>
            <person name="Hilbert H."/>
            <person name="Hinni K."/>
            <person name="Iraqui Houssaini I."/>
            <person name="Jacquet M."/>
            <person name="Jimenez A."/>
            <person name="Jonniaux J.-L."/>
            <person name="Karpfinger-Hartl L."/>
            <person name="Lanfranchi G."/>
            <person name="Lepingle A."/>
            <person name="Levesque H."/>
            <person name="Lyck R."/>
            <person name="Maftahi M."/>
            <person name="Mallet L."/>
            <person name="Maurer C.T.C."/>
            <person name="Messenguy F."/>
            <person name="Mewes H.-W."/>
            <person name="Moestl D."/>
            <person name="Nasr F."/>
            <person name="Nicaud J.-M."/>
            <person name="Niedenthal R.K."/>
            <person name="Pandolfo D."/>
            <person name="Pierard A."/>
            <person name="Piravandi E."/>
            <person name="Planta R.J."/>
            <person name="Pohl T.M."/>
            <person name="Purnelle B."/>
            <person name="Rebischung C."/>
            <person name="Remacha M.A."/>
            <person name="Revuelta J.L."/>
            <person name="Rinke M."/>
            <person name="Saiz J.E."/>
            <person name="Sartorello F."/>
            <person name="Scherens B."/>
            <person name="Sen-Gupta M."/>
            <person name="Soler-Mira A."/>
            <person name="Urbanus J.H.M."/>
            <person name="Valle G."/>
            <person name="Van Dyck L."/>
            <person name="Verhasselt P."/>
            <person name="Vierendeels F."/>
            <person name="Vissers S."/>
            <person name="Voet M."/>
            <person name="Volckaert G."/>
            <person name="Wach A."/>
            <person name="Wambutt R."/>
            <person name="Wedler H."/>
            <person name="Zollner A."/>
            <person name="Hani J."/>
        </authorList>
    </citation>
    <scope>NUCLEOTIDE SEQUENCE [LARGE SCALE GENOMIC DNA]</scope>
    <source>
        <strain>ATCC 204508 / S288c</strain>
    </source>
</reference>
<reference key="2">
    <citation type="journal article" date="2014" name="G3 (Bethesda)">
        <title>The reference genome sequence of Saccharomyces cerevisiae: Then and now.</title>
        <authorList>
            <person name="Engel S.R."/>
            <person name="Dietrich F.S."/>
            <person name="Fisk D.G."/>
            <person name="Binkley G."/>
            <person name="Balakrishnan R."/>
            <person name="Costanzo M.C."/>
            <person name="Dwight S.S."/>
            <person name="Hitz B.C."/>
            <person name="Karra K."/>
            <person name="Nash R.S."/>
            <person name="Weng S."/>
            <person name="Wong E.D."/>
            <person name="Lloyd P."/>
            <person name="Skrzypek M.S."/>
            <person name="Miyasato S.R."/>
            <person name="Simison M."/>
            <person name="Cherry J.M."/>
        </authorList>
    </citation>
    <scope>GENOME REANNOTATION</scope>
    <source>
        <strain>ATCC 204508 / S288c</strain>
    </source>
</reference>
<reference key="3">
    <citation type="journal article" date="2003" name="J. Biol. Chem.">
        <title>An essential role of Sam50 in the protein sorting and assembly machinery of the mitochondrial outer membrane.</title>
        <authorList>
            <person name="Kozjak V."/>
            <person name="Wiedemann N."/>
            <person name="Milenkovic D."/>
            <person name="Lohaus C."/>
            <person name="Meyer H.E."/>
            <person name="Guiard B."/>
            <person name="Meisinger C."/>
            <person name="Pfanner N."/>
        </authorList>
    </citation>
    <scope>IDENTIFICATION BY MASS SPECTROMETRY</scope>
    <scope>FUNCTION</scope>
    <scope>SUBCELLULAR LOCATION</scope>
    <scope>IDENTIFICATION IN THE SAM COMPLEX</scope>
</reference>
<reference key="4">
    <citation type="journal article" date="2003" name="Nature">
        <title>Evolutionary conservation of biogenesis of beta-barrel membrane proteins.</title>
        <authorList>
            <person name="Paschen S.A."/>
            <person name="Waizenegger T."/>
            <person name="Stan T."/>
            <person name="Preuss M."/>
            <person name="Cyrklaff M."/>
            <person name="Hell K."/>
            <person name="Rapaport D."/>
            <person name="Neupert W."/>
        </authorList>
    </citation>
    <scope>IDENTIFICATION IN THE SAM COMPLEX</scope>
</reference>
<reference key="5">
    <citation type="journal article" date="2005" name="J. Biol. Chem.">
        <title>Assembly of the TOB complex of mitochondria.</title>
        <authorList>
            <person name="Habib S.J."/>
            <person name="Waizenegger T."/>
            <person name="Lech M."/>
            <person name="Neupert W."/>
            <person name="Rapaport D."/>
        </authorList>
    </citation>
    <scope>IDENTIFICATION IN THE SAM COMPLEX</scope>
</reference>
<protein>
    <recommendedName>
        <fullName>Sorting assembly machinery 50 kDa subunit</fullName>
    </recommendedName>
    <alternativeName>
        <fullName>TOB complex 55 kDa subunit</fullName>
    </alternativeName>
</protein>
<keyword id="KW-0002">3D-structure</keyword>
<keyword id="KW-0472">Membrane</keyword>
<keyword id="KW-0496">Mitochondrion</keyword>
<keyword id="KW-1000">Mitochondrion outer membrane</keyword>
<keyword id="KW-0653">Protein transport</keyword>
<keyword id="KW-1185">Reference proteome</keyword>
<keyword id="KW-0812">Transmembrane</keyword>
<keyword id="KW-1134">Transmembrane beta strand</keyword>
<keyword id="KW-0813">Transport</keyword>
<comment type="function">
    <text evidence="2">Component of the mitochondrial outer membrane sorting assembly machinery (SAM or TOB) complex, which is required for the sorting of proteins with complicated topology, such as beta-barrel proteins, to the mitochondrial outer membrane after import by the TOM complex.</text>
</comment>
<comment type="subunit">
    <text evidence="1 2 3 4">Component of the mitochondrial outer membrane sorting assembly machinery (SAM or TOB) complex, which at least consists of SAM35, SAM37 and SAM50 (PubMed:14570913, PubMed:14685243, PubMed:15590639). Associates with the mitochondrial contact site and cristae organizing system (MICOS) complex (also known as MINOS or MitOS complex) (By similarity).</text>
</comment>
<comment type="interaction">
    <interactant intactId="EBI-28646">
        <id>P53969</id>
    </interactant>
    <interactant intactId="EBI-10580">
        <id>P18409</id>
        <label>MDM10</label>
    </interactant>
    <organismsDiffer>false</organismsDiffer>
    <experiments>4</experiments>
</comment>
<comment type="interaction">
    <interactant intactId="EBI-28646">
        <id>P53969</id>
    </interactant>
    <interactant intactId="EBI-24602">
        <id>P14693</id>
        <label>SAM35</label>
    </interactant>
    <organismsDiffer>false</organismsDiffer>
    <experiments>9</experiments>
</comment>
<comment type="interaction">
    <interactant intactId="EBI-28646">
        <id>P53969</id>
    </interactant>
    <interactant intactId="EBI-2347180">
        <id>P50110</id>
        <label>SAM37</label>
    </interactant>
    <organismsDiffer>false</organismsDiffer>
    <experiments>5</experiments>
</comment>
<comment type="interaction">
    <interactant intactId="EBI-28646">
        <id>P53969</id>
    </interactant>
    <interactant intactId="EBI-12527">
        <id>P49334</id>
        <label>TOM22</label>
    </interactant>
    <organismsDiffer>false</organismsDiffer>
    <experiments>6</experiments>
</comment>
<comment type="interaction">
    <interactant intactId="EBI-28646">
        <id>P53969</id>
    </interactant>
    <interactant intactId="EBI-12539">
        <id>P23644</id>
        <label>TOM40</label>
    </interactant>
    <organismsDiffer>false</organismsDiffer>
    <experiments>4</experiments>
</comment>
<comment type="subcellular location">
    <subcellularLocation>
        <location evidence="2">Mitochondrion outer membrane</location>
        <topology evidence="6">Multi-pass membrane protein</topology>
    </subcellularLocation>
</comment>
<comment type="domain">
    <text evidence="6">Its C-terminal part seems to contain many membrane-spanning sided beta-sheets, that have the potential to adopt a transmembrane beta-barrel type structure.</text>
</comment>
<comment type="similarity">
    <text evidence="5">Belongs to the SAM50/omp85 family.</text>
</comment>
<organism>
    <name type="scientific">Saccharomyces cerevisiae (strain ATCC 204508 / S288c)</name>
    <name type="common">Baker's yeast</name>
    <dbReference type="NCBI Taxonomy" id="559292"/>
    <lineage>
        <taxon>Eukaryota</taxon>
        <taxon>Fungi</taxon>
        <taxon>Dikarya</taxon>
        <taxon>Ascomycota</taxon>
        <taxon>Saccharomycotina</taxon>
        <taxon>Saccharomycetes</taxon>
        <taxon>Saccharomycetales</taxon>
        <taxon>Saccharomycetaceae</taxon>
        <taxon>Saccharomyces</taxon>
    </lineage>
</organism>
<name>SAM50_YEAST</name>
<feature type="chain" id="PRO_0000215943" description="Sorting assembly machinery 50 kDa subunit">
    <location>
        <begin position="1"/>
        <end position="484"/>
    </location>
</feature>
<feature type="strand" evidence="7">
    <location>
        <begin position="30"/>
        <end position="38"/>
    </location>
</feature>
<feature type="helix" evidence="7">
    <location>
        <begin position="44"/>
        <end position="54"/>
    </location>
</feature>
<feature type="turn" evidence="7">
    <location>
        <begin position="55"/>
        <end position="57"/>
    </location>
</feature>
<feature type="helix" evidence="7">
    <location>
        <begin position="61"/>
        <end position="77"/>
    </location>
</feature>
<feature type="strand" evidence="7">
    <location>
        <begin position="84"/>
        <end position="87"/>
    </location>
</feature>
<feature type="strand" evidence="7">
    <location>
        <begin position="109"/>
        <end position="116"/>
    </location>
</feature>
<feature type="strand" evidence="7">
    <location>
        <begin position="124"/>
        <end position="131"/>
    </location>
</feature>
<feature type="strand" evidence="7">
    <location>
        <begin position="133"/>
        <end position="135"/>
    </location>
</feature>
<feature type="strand" evidence="7">
    <location>
        <begin position="137"/>
        <end position="146"/>
    </location>
</feature>
<feature type="turn" evidence="7">
    <location>
        <begin position="149"/>
        <end position="151"/>
    </location>
</feature>
<feature type="strand" evidence="7">
    <location>
        <begin position="156"/>
        <end position="181"/>
    </location>
</feature>
<feature type="strand" evidence="7">
    <location>
        <begin position="184"/>
        <end position="196"/>
    </location>
</feature>
<feature type="helix" evidence="7">
    <location>
        <begin position="199"/>
        <end position="201"/>
    </location>
</feature>
<feature type="strand" evidence="7">
    <location>
        <begin position="203"/>
        <end position="216"/>
    </location>
</feature>
<feature type="strand" evidence="7">
    <location>
        <begin position="235"/>
        <end position="251"/>
    </location>
</feature>
<feature type="turn" evidence="7">
    <location>
        <begin position="255"/>
        <end position="257"/>
    </location>
</feature>
<feature type="helix" evidence="7">
    <location>
        <begin position="264"/>
        <end position="267"/>
    </location>
</feature>
<feature type="strand" evidence="7">
    <location>
        <begin position="271"/>
        <end position="285"/>
    </location>
</feature>
<feature type="strand" evidence="7">
    <location>
        <begin position="290"/>
        <end position="292"/>
    </location>
</feature>
<feature type="strand" evidence="7">
    <location>
        <begin position="295"/>
        <end position="306"/>
    </location>
</feature>
<feature type="turn" evidence="7">
    <location>
        <begin position="307"/>
        <end position="309"/>
    </location>
</feature>
<feature type="strand" evidence="7">
    <location>
        <begin position="310"/>
        <end position="322"/>
    </location>
</feature>
<feature type="strand" evidence="7">
    <location>
        <begin position="329"/>
        <end position="342"/>
    </location>
</feature>
<feature type="helix" evidence="7">
    <location>
        <begin position="345"/>
        <end position="347"/>
    </location>
</feature>
<feature type="helix" evidence="7">
    <location>
        <begin position="353"/>
        <end position="355"/>
    </location>
</feature>
<feature type="turn" evidence="7">
    <location>
        <begin position="362"/>
        <end position="364"/>
    </location>
</feature>
<feature type="strand" evidence="7">
    <location>
        <begin position="376"/>
        <end position="381"/>
    </location>
</feature>
<feature type="strand" evidence="7">
    <location>
        <begin position="384"/>
        <end position="397"/>
    </location>
</feature>
<feature type="strand" evidence="7">
    <location>
        <begin position="403"/>
        <end position="420"/>
    </location>
</feature>
<feature type="helix" evidence="7">
    <location>
        <begin position="427"/>
        <end position="433"/>
    </location>
</feature>
<feature type="strand" evidence="7">
    <location>
        <begin position="435"/>
        <end position="437"/>
    </location>
</feature>
<feature type="strand" evidence="7">
    <location>
        <begin position="441"/>
        <end position="449"/>
    </location>
</feature>
<feature type="strand" evidence="7">
    <location>
        <begin position="454"/>
        <end position="466"/>
    </location>
</feature>
<feature type="strand" evidence="7">
    <location>
        <begin position="474"/>
        <end position="481"/>
    </location>
</feature>